<proteinExistence type="inferred from homology"/>
<accession>B1HVX5</accession>
<comment type="function">
    <text evidence="1">Is involved in L-lactate degradation and allows cells to grow with lactate as the sole carbon source. Has probably a role as an electron transporter during oxidation of L-lactate.</text>
</comment>
<comment type="similarity">
    <text evidence="1">Belongs to the LutB/YkgF family.</text>
</comment>
<organism>
    <name type="scientific">Lysinibacillus sphaericus (strain C3-41)</name>
    <dbReference type="NCBI Taxonomy" id="444177"/>
    <lineage>
        <taxon>Bacteria</taxon>
        <taxon>Bacillati</taxon>
        <taxon>Bacillota</taxon>
        <taxon>Bacilli</taxon>
        <taxon>Bacillales</taxon>
        <taxon>Bacillaceae</taxon>
        <taxon>Lysinibacillus</taxon>
    </lineage>
</organism>
<feature type="chain" id="PRO_0000383984" description="Lactate utilization protein B">
    <location>
        <begin position="1"/>
        <end position="476"/>
    </location>
</feature>
<feature type="domain" description="4Fe-4S ferredoxin-type 1" evidence="1">
    <location>
        <begin position="304"/>
        <end position="334"/>
    </location>
</feature>
<feature type="domain" description="4Fe-4S ferredoxin-type 2" evidence="1">
    <location>
        <begin position="353"/>
        <end position="382"/>
    </location>
</feature>
<feature type="region of interest" description="Disordered" evidence="2">
    <location>
        <begin position="452"/>
        <end position="476"/>
    </location>
</feature>
<feature type="binding site" evidence="1">
    <location>
        <position position="313"/>
    </location>
    <ligand>
        <name>[4Fe-4S] cluster</name>
        <dbReference type="ChEBI" id="CHEBI:49883"/>
        <label>1</label>
    </ligand>
</feature>
<feature type="binding site" evidence="1">
    <location>
        <position position="316"/>
    </location>
    <ligand>
        <name>[4Fe-4S] cluster</name>
        <dbReference type="ChEBI" id="CHEBI:49883"/>
        <label>1</label>
    </ligand>
</feature>
<feature type="binding site" evidence="1">
    <location>
        <position position="319"/>
    </location>
    <ligand>
        <name>[4Fe-4S] cluster</name>
        <dbReference type="ChEBI" id="CHEBI:49883"/>
        <label>1</label>
    </ligand>
</feature>
<feature type="binding site" evidence="1">
    <location>
        <position position="323"/>
    </location>
    <ligand>
        <name>[4Fe-4S] cluster</name>
        <dbReference type="ChEBI" id="CHEBI:49883"/>
        <label>2</label>
    </ligand>
</feature>
<feature type="binding site" evidence="1">
    <location>
        <position position="366"/>
    </location>
    <ligand>
        <name>[4Fe-4S] cluster</name>
        <dbReference type="ChEBI" id="CHEBI:49883"/>
        <label>2</label>
    </ligand>
</feature>
<feature type="binding site" evidence="1">
    <location>
        <position position="369"/>
    </location>
    <ligand>
        <name>[4Fe-4S] cluster</name>
        <dbReference type="ChEBI" id="CHEBI:49883"/>
        <label>2</label>
    </ligand>
</feature>
<feature type="binding site" evidence="1">
    <location>
        <position position="373"/>
    </location>
    <ligand>
        <name>[4Fe-4S] cluster</name>
        <dbReference type="ChEBI" id="CHEBI:49883"/>
        <label>1</label>
    </ligand>
</feature>
<keyword id="KW-0004">4Fe-4S</keyword>
<keyword id="KW-0249">Electron transport</keyword>
<keyword id="KW-0408">Iron</keyword>
<keyword id="KW-0411">Iron-sulfur</keyword>
<keyword id="KW-0479">Metal-binding</keyword>
<keyword id="KW-0677">Repeat</keyword>
<keyword id="KW-0813">Transport</keyword>
<evidence type="ECO:0000255" key="1">
    <source>
        <dbReference type="HAMAP-Rule" id="MF_02103"/>
    </source>
</evidence>
<evidence type="ECO:0000256" key="2">
    <source>
        <dbReference type="SAM" id="MobiDB-lite"/>
    </source>
</evidence>
<gene>
    <name evidence="1" type="primary">lutB</name>
    <name type="ordered locus">Bsph_2258</name>
</gene>
<dbReference type="EMBL" id="CP000817">
    <property type="protein sequence ID" value="ACA39823.1"/>
    <property type="molecule type" value="Genomic_DNA"/>
</dbReference>
<dbReference type="RefSeq" id="WP_012293911.1">
    <property type="nucleotide sequence ID" value="NC_010382.1"/>
</dbReference>
<dbReference type="EnsemblBacteria" id="ACA39823">
    <property type="protein sequence ID" value="ACA39823"/>
    <property type="gene ID" value="Bsph_2258"/>
</dbReference>
<dbReference type="KEGG" id="lsp:Bsph_2258"/>
<dbReference type="HOGENOM" id="CLU_027059_2_0_9"/>
<dbReference type="Proteomes" id="UP000002164">
    <property type="component" value="Chromosome"/>
</dbReference>
<dbReference type="GO" id="GO:0051539">
    <property type="term" value="F:4 iron, 4 sulfur cluster binding"/>
    <property type="evidence" value="ECO:0007669"/>
    <property type="project" value="UniProtKB-KW"/>
</dbReference>
<dbReference type="GO" id="GO:0046872">
    <property type="term" value="F:metal ion binding"/>
    <property type="evidence" value="ECO:0007669"/>
    <property type="project" value="UniProtKB-KW"/>
</dbReference>
<dbReference type="GO" id="GO:0006089">
    <property type="term" value="P:lactate metabolic process"/>
    <property type="evidence" value="ECO:0007669"/>
    <property type="project" value="UniProtKB-UniRule"/>
</dbReference>
<dbReference type="Gene3D" id="1.10.1060.10">
    <property type="entry name" value="Alpha-helical ferredoxin"/>
    <property type="match status" value="1"/>
</dbReference>
<dbReference type="Gene3D" id="3.40.50.10420">
    <property type="entry name" value="NagB/RpiA/CoA transferase-like"/>
    <property type="match status" value="1"/>
</dbReference>
<dbReference type="HAMAP" id="MF_02103">
    <property type="entry name" value="LutB"/>
    <property type="match status" value="1"/>
</dbReference>
<dbReference type="InterPro" id="IPR017896">
    <property type="entry name" value="4Fe4S_Fe-S-bd"/>
</dbReference>
<dbReference type="InterPro" id="IPR017900">
    <property type="entry name" value="4Fe4S_Fe_S_CS"/>
</dbReference>
<dbReference type="InterPro" id="IPR024185">
    <property type="entry name" value="FTHF_cligase-like_sf"/>
</dbReference>
<dbReference type="InterPro" id="IPR009051">
    <property type="entry name" value="Helical_ferredxn"/>
</dbReference>
<dbReference type="InterPro" id="IPR003741">
    <property type="entry name" value="LUD_dom"/>
</dbReference>
<dbReference type="InterPro" id="IPR022825">
    <property type="entry name" value="LutB"/>
</dbReference>
<dbReference type="InterPro" id="IPR004452">
    <property type="entry name" value="LutB/LldF"/>
</dbReference>
<dbReference type="InterPro" id="IPR024569">
    <property type="entry name" value="LutB_C"/>
</dbReference>
<dbReference type="InterPro" id="IPR037171">
    <property type="entry name" value="NagB/RpiA_transferase-like"/>
</dbReference>
<dbReference type="NCBIfam" id="TIGR00273">
    <property type="entry name" value="LutB/LldF family L-lactate oxidation iron-sulfur protein"/>
    <property type="match status" value="1"/>
</dbReference>
<dbReference type="PANTHER" id="PTHR47153">
    <property type="entry name" value="LACTATE UTILIZATION PROTEIN B"/>
    <property type="match status" value="1"/>
</dbReference>
<dbReference type="PANTHER" id="PTHR47153:SF2">
    <property type="entry name" value="LACTATE UTILIZATION PROTEIN B"/>
    <property type="match status" value="1"/>
</dbReference>
<dbReference type="Pfam" id="PF13183">
    <property type="entry name" value="Fer4_8"/>
    <property type="match status" value="1"/>
</dbReference>
<dbReference type="Pfam" id="PF02589">
    <property type="entry name" value="LUD_dom"/>
    <property type="match status" value="1"/>
</dbReference>
<dbReference type="Pfam" id="PF11870">
    <property type="entry name" value="LutB_C"/>
    <property type="match status" value="1"/>
</dbReference>
<dbReference type="SUPFAM" id="SSF46548">
    <property type="entry name" value="alpha-helical ferredoxin"/>
    <property type="match status" value="1"/>
</dbReference>
<dbReference type="SUPFAM" id="SSF100950">
    <property type="entry name" value="NagB/RpiA/CoA transferase-like"/>
    <property type="match status" value="1"/>
</dbReference>
<dbReference type="PROSITE" id="PS00198">
    <property type="entry name" value="4FE4S_FER_1"/>
    <property type="match status" value="1"/>
</dbReference>
<reference key="1">
    <citation type="journal article" date="2008" name="J. Bacteriol.">
        <title>Complete genome sequence of the mosquitocidal bacterium Bacillus sphaericus C3-41 and comparison with those of closely related Bacillus species.</title>
        <authorList>
            <person name="Hu X."/>
            <person name="Fan W."/>
            <person name="Han B."/>
            <person name="Liu H."/>
            <person name="Zheng D."/>
            <person name="Li Q."/>
            <person name="Dong W."/>
            <person name="Yan J."/>
            <person name="Gao M."/>
            <person name="Berry C."/>
            <person name="Yuan Z."/>
        </authorList>
    </citation>
    <scope>NUCLEOTIDE SEQUENCE [LARGE SCALE GENOMIC DNA]</scope>
    <source>
        <strain>C3-41</strain>
    </source>
</reference>
<protein>
    <recommendedName>
        <fullName evidence="1">Lactate utilization protein B</fullName>
    </recommendedName>
</protein>
<name>LUTB_LYSSC</name>
<sequence length="476" mass="52934">MAMKTSNNRFQDRVTKELENQFMRSAVSRAQDRFQTRRLQQTQELGDWEEWRSHGEEIRKHVLENLDYYLYQLSDNVAKRGGHVFFAQTAQEATAYIQDIAKKKNAAKIVKSKSMVTEEINLNAALEELGCEVIETDLGEYILQVADHEPPSHIVAPALHKNKEQIRDVFKAKQGYTQSEKPEELALYVREKLRDEYLTADIGITGCNFAIAESGSITLVTNEGNADLVTALPKTQVTVMGMERIVPTFEEMEVLVSLLTRSAVGQKLTSYITTLTGIKDEGDTDGPEEFHLVIVDNGRSAILGGEFQPILQCIRCAACVNACPVYRHVGGHTYGSIYSGPLGVVLSPLLGGYDDFKELPYASTLCGACTDACPVKIPLHQLIHRHRQVIVENEGKAPVSEKLLMKAFGLGASSPTLYKMATKMAAPAMAPFTNDHTITKGPGPLKAWTEARDFPAPNKNSFRNWMKHRTKGDEES</sequence>